<protein>
    <recommendedName>
        <fullName evidence="1">Iron-sulfur cluster insertion protein ErpA</fullName>
    </recommendedName>
</protein>
<dbReference type="EMBL" id="AE003849">
    <property type="protein sequence ID" value="AAF83215.1"/>
    <property type="molecule type" value="Genomic_DNA"/>
</dbReference>
<dbReference type="PIR" id="B82812">
    <property type="entry name" value="B82812"/>
</dbReference>
<dbReference type="RefSeq" id="WP_010892935.1">
    <property type="nucleotide sequence ID" value="NC_002488.3"/>
</dbReference>
<dbReference type="SMR" id="P64342"/>
<dbReference type="STRING" id="160492.XF_0405"/>
<dbReference type="GeneID" id="93905503"/>
<dbReference type="KEGG" id="xfa:XF_0405"/>
<dbReference type="eggNOG" id="COG0316">
    <property type="taxonomic scope" value="Bacteria"/>
</dbReference>
<dbReference type="HOGENOM" id="CLU_069054_5_3_6"/>
<dbReference type="Proteomes" id="UP000000812">
    <property type="component" value="Chromosome"/>
</dbReference>
<dbReference type="GO" id="GO:0005829">
    <property type="term" value="C:cytosol"/>
    <property type="evidence" value="ECO:0007669"/>
    <property type="project" value="TreeGrafter"/>
</dbReference>
<dbReference type="GO" id="GO:0051537">
    <property type="term" value="F:2 iron, 2 sulfur cluster binding"/>
    <property type="evidence" value="ECO:0007669"/>
    <property type="project" value="TreeGrafter"/>
</dbReference>
<dbReference type="GO" id="GO:0051539">
    <property type="term" value="F:4 iron, 4 sulfur cluster binding"/>
    <property type="evidence" value="ECO:0007669"/>
    <property type="project" value="TreeGrafter"/>
</dbReference>
<dbReference type="GO" id="GO:0005506">
    <property type="term" value="F:iron ion binding"/>
    <property type="evidence" value="ECO:0007669"/>
    <property type="project" value="UniProtKB-UniRule"/>
</dbReference>
<dbReference type="GO" id="GO:0016226">
    <property type="term" value="P:iron-sulfur cluster assembly"/>
    <property type="evidence" value="ECO:0007669"/>
    <property type="project" value="UniProtKB-UniRule"/>
</dbReference>
<dbReference type="FunFam" id="2.60.300.12:FF:000002">
    <property type="entry name" value="Iron-sulfur cluster insertion protein ErpA"/>
    <property type="match status" value="1"/>
</dbReference>
<dbReference type="Gene3D" id="2.60.300.12">
    <property type="entry name" value="HesB-like domain"/>
    <property type="match status" value="1"/>
</dbReference>
<dbReference type="HAMAP" id="MF_01380">
    <property type="entry name" value="Fe_S_insert_ErpA"/>
    <property type="match status" value="1"/>
</dbReference>
<dbReference type="InterPro" id="IPR000361">
    <property type="entry name" value="FeS_biogenesis"/>
</dbReference>
<dbReference type="InterPro" id="IPR016092">
    <property type="entry name" value="FeS_cluster_insertion"/>
</dbReference>
<dbReference type="InterPro" id="IPR017870">
    <property type="entry name" value="FeS_cluster_insertion_CS"/>
</dbReference>
<dbReference type="InterPro" id="IPR023063">
    <property type="entry name" value="FeS_cluster_insertion_RrpA"/>
</dbReference>
<dbReference type="InterPro" id="IPR035903">
    <property type="entry name" value="HesB-like_dom_sf"/>
</dbReference>
<dbReference type="NCBIfam" id="TIGR00049">
    <property type="entry name" value="iron-sulfur cluster assembly accessory protein"/>
    <property type="match status" value="1"/>
</dbReference>
<dbReference type="NCBIfam" id="NF010147">
    <property type="entry name" value="PRK13623.1"/>
    <property type="match status" value="1"/>
</dbReference>
<dbReference type="PANTHER" id="PTHR43011">
    <property type="entry name" value="IRON-SULFUR CLUSTER ASSEMBLY 2 HOMOLOG, MITOCHONDRIAL"/>
    <property type="match status" value="1"/>
</dbReference>
<dbReference type="PANTHER" id="PTHR43011:SF1">
    <property type="entry name" value="IRON-SULFUR CLUSTER ASSEMBLY 2 HOMOLOG, MITOCHONDRIAL"/>
    <property type="match status" value="1"/>
</dbReference>
<dbReference type="Pfam" id="PF01521">
    <property type="entry name" value="Fe-S_biosyn"/>
    <property type="match status" value="1"/>
</dbReference>
<dbReference type="SUPFAM" id="SSF89360">
    <property type="entry name" value="HesB-like domain"/>
    <property type="match status" value="1"/>
</dbReference>
<dbReference type="PROSITE" id="PS01152">
    <property type="entry name" value="HESB"/>
    <property type="match status" value="1"/>
</dbReference>
<keyword id="KW-0408">Iron</keyword>
<keyword id="KW-0411">Iron-sulfur</keyword>
<keyword id="KW-0479">Metal-binding</keyword>
<accession>P64342</accession>
<accession>Q9PG97</accession>
<organism>
    <name type="scientific">Xylella fastidiosa (strain 9a5c)</name>
    <dbReference type="NCBI Taxonomy" id="160492"/>
    <lineage>
        <taxon>Bacteria</taxon>
        <taxon>Pseudomonadati</taxon>
        <taxon>Pseudomonadota</taxon>
        <taxon>Gammaproteobacteria</taxon>
        <taxon>Lysobacterales</taxon>
        <taxon>Lysobacteraceae</taxon>
        <taxon>Xylella</taxon>
    </lineage>
</organism>
<proteinExistence type="inferred from homology"/>
<feature type="chain" id="PRO_0000077031" description="Iron-sulfur cluster insertion protein ErpA">
    <location>
        <begin position="1"/>
        <end position="128"/>
    </location>
</feature>
<feature type="binding site" evidence="1">
    <location>
        <position position="56"/>
    </location>
    <ligand>
        <name>iron-sulfur cluster</name>
        <dbReference type="ChEBI" id="CHEBI:30408"/>
    </ligand>
</feature>
<feature type="binding site" evidence="1">
    <location>
        <position position="120"/>
    </location>
    <ligand>
        <name>iron-sulfur cluster</name>
        <dbReference type="ChEBI" id="CHEBI:30408"/>
    </ligand>
</feature>
<feature type="binding site" evidence="1">
    <location>
        <position position="122"/>
    </location>
    <ligand>
        <name>iron-sulfur cluster</name>
        <dbReference type="ChEBI" id="CHEBI:30408"/>
    </ligand>
</feature>
<name>ERPA_XYLFA</name>
<sequence>MTMLISLPTAPSVPNYQSLERPLNFTMAAAAKVRELIQEENNADLALRVYIQGGGCSGFQYGFEFDENRADDDLALETDGVVLLVDPLSLQYLLGAEVDYTESLTGAKFVIRNPNAKTTCGCGSSFSV</sequence>
<gene>
    <name evidence="1" type="primary">erpA</name>
    <name type="ordered locus">XF_0405</name>
</gene>
<evidence type="ECO:0000255" key="1">
    <source>
        <dbReference type="HAMAP-Rule" id="MF_01380"/>
    </source>
</evidence>
<comment type="function">
    <text evidence="1">Required for insertion of 4Fe-4S clusters for at least IspG.</text>
</comment>
<comment type="cofactor">
    <cofactor evidence="1">
        <name>iron-sulfur cluster</name>
        <dbReference type="ChEBI" id="CHEBI:30408"/>
    </cofactor>
    <text evidence="1">Binds 1 iron-sulfur cluster per subunit.</text>
</comment>
<comment type="subunit">
    <text evidence="1">Homodimer.</text>
</comment>
<comment type="similarity">
    <text evidence="1">Belongs to the HesB/IscA family.</text>
</comment>
<reference key="1">
    <citation type="journal article" date="2000" name="Nature">
        <title>The genome sequence of the plant pathogen Xylella fastidiosa.</title>
        <authorList>
            <person name="Simpson A.J.G."/>
            <person name="Reinach F.C."/>
            <person name="Arruda P."/>
            <person name="Abreu F.A."/>
            <person name="Acencio M."/>
            <person name="Alvarenga R."/>
            <person name="Alves L.M.C."/>
            <person name="Araya J.E."/>
            <person name="Baia G.S."/>
            <person name="Baptista C.S."/>
            <person name="Barros M.H."/>
            <person name="Bonaccorsi E.D."/>
            <person name="Bordin S."/>
            <person name="Bove J.M."/>
            <person name="Briones M.R.S."/>
            <person name="Bueno M.R.P."/>
            <person name="Camargo A.A."/>
            <person name="Camargo L.E.A."/>
            <person name="Carraro D.M."/>
            <person name="Carrer H."/>
            <person name="Colauto N.B."/>
            <person name="Colombo C."/>
            <person name="Costa F.F."/>
            <person name="Costa M.C.R."/>
            <person name="Costa-Neto C.M."/>
            <person name="Coutinho L.L."/>
            <person name="Cristofani M."/>
            <person name="Dias-Neto E."/>
            <person name="Docena C."/>
            <person name="El-Dorry H."/>
            <person name="Facincani A.P."/>
            <person name="Ferreira A.J.S."/>
            <person name="Ferreira V.C.A."/>
            <person name="Ferro J.A."/>
            <person name="Fraga J.S."/>
            <person name="Franca S.C."/>
            <person name="Franco M.C."/>
            <person name="Frohme M."/>
            <person name="Furlan L.R."/>
            <person name="Garnier M."/>
            <person name="Goldman G.H."/>
            <person name="Goldman M.H.S."/>
            <person name="Gomes S.L."/>
            <person name="Gruber A."/>
            <person name="Ho P.L."/>
            <person name="Hoheisel J.D."/>
            <person name="Junqueira M.L."/>
            <person name="Kemper E.L."/>
            <person name="Kitajima J.P."/>
            <person name="Krieger J.E."/>
            <person name="Kuramae E.E."/>
            <person name="Laigret F."/>
            <person name="Lambais M.R."/>
            <person name="Leite L.C.C."/>
            <person name="Lemos E.G.M."/>
            <person name="Lemos M.V.F."/>
            <person name="Lopes S.A."/>
            <person name="Lopes C.R."/>
            <person name="Machado J.A."/>
            <person name="Machado M.A."/>
            <person name="Madeira A.M.B.N."/>
            <person name="Madeira H.M.F."/>
            <person name="Marino C.L."/>
            <person name="Marques M.V."/>
            <person name="Martins E.A.L."/>
            <person name="Martins E.M.F."/>
            <person name="Matsukuma A.Y."/>
            <person name="Menck C.F.M."/>
            <person name="Miracca E.C."/>
            <person name="Miyaki C.Y."/>
            <person name="Monteiro-Vitorello C.B."/>
            <person name="Moon D.H."/>
            <person name="Nagai M.A."/>
            <person name="Nascimento A.L.T.O."/>
            <person name="Netto L.E.S."/>
            <person name="Nhani A. Jr."/>
            <person name="Nobrega F.G."/>
            <person name="Nunes L.R."/>
            <person name="Oliveira M.A."/>
            <person name="de Oliveira M.C."/>
            <person name="de Oliveira R.C."/>
            <person name="Palmieri D.A."/>
            <person name="Paris A."/>
            <person name="Peixoto B.R."/>
            <person name="Pereira G.A.G."/>
            <person name="Pereira H.A. Jr."/>
            <person name="Pesquero J.B."/>
            <person name="Quaggio R.B."/>
            <person name="Roberto P.G."/>
            <person name="Rodrigues V."/>
            <person name="de Rosa A.J.M."/>
            <person name="de Rosa V.E. Jr."/>
            <person name="de Sa R.G."/>
            <person name="Santelli R.V."/>
            <person name="Sawasaki H.E."/>
            <person name="da Silva A.C.R."/>
            <person name="da Silva A.M."/>
            <person name="da Silva F.R."/>
            <person name="Silva W.A. Jr."/>
            <person name="da Silveira J.F."/>
            <person name="Silvestri M.L.Z."/>
            <person name="Siqueira W.J."/>
            <person name="de Souza A.A."/>
            <person name="de Souza A.P."/>
            <person name="Terenzi M.F."/>
            <person name="Truffi D."/>
            <person name="Tsai S.M."/>
            <person name="Tsuhako M.H."/>
            <person name="Vallada H."/>
            <person name="Van Sluys M.A."/>
            <person name="Verjovski-Almeida S."/>
            <person name="Vettore A.L."/>
            <person name="Zago M.A."/>
            <person name="Zatz M."/>
            <person name="Meidanis J."/>
            <person name="Setubal J.C."/>
        </authorList>
    </citation>
    <scope>NUCLEOTIDE SEQUENCE [LARGE SCALE GENOMIC DNA]</scope>
    <source>
        <strain>9a5c</strain>
    </source>
</reference>